<sequence length="303" mass="34604">MRLRHVVSSLDLTRDDYFRIFELADKFSNVKKLNYLSGKVVSLAFFEPSTRTAQSFHTAAIKLGADVIGFASEESTSIAKGENLADTIRMLNNYSNCIVMRHKFDGAALFASEISDIPIINAGDGKHEHPTQALIDLYTIYKVFGEIDGRTFGLLGDLKYARTVNSLLRALTRFKPKKVFLISPSQLKVRREILDGLNYPVIETENPYDVIQDIDVLYVTRIQKERFVDEVEYEKVKESYVVDLKLVNMMKKDGIILHPLPRVTEIDRKVDKTTNAKYFYQASLAVPVRMALFYEVLGERKDD</sequence>
<keyword id="KW-0665">Pyrimidine biosynthesis</keyword>
<keyword id="KW-0808">Transferase</keyword>
<accession>C3NGZ9</accession>
<protein>
    <recommendedName>
        <fullName evidence="1">Aspartate carbamoyltransferase catalytic subunit</fullName>
        <ecNumber evidence="1">2.1.3.2</ecNumber>
    </recommendedName>
    <alternativeName>
        <fullName evidence="1">Aspartate transcarbamylase</fullName>
        <shortName evidence="1">ATCase</shortName>
    </alternativeName>
</protein>
<feature type="chain" id="PRO_1000201605" description="Aspartate carbamoyltransferase catalytic subunit">
    <location>
        <begin position="1"/>
        <end position="303"/>
    </location>
</feature>
<feature type="binding site" evidence="1">
    <location>
        <position position="51"/>
    </location>
    <ligand>
        <name>carbamoyl phosphate</name>
        <dbReference type="ChEBI" id="CHEBI:58228"/>
    </ligand>
</feature>
<feature type="binding site" evidence="1">
    <location>
        <position position="52"/>
    </location>
    <ligand>
        <name>carbamoyl phosphate</name>
        <dbReference type="ChEBI" id="CHEBI:58228"/>
    </ligand>
</feature>
<feature type="binding site" evidence="1">
    <location>
        <position position="80"/>
    </location>
    <ligand>
        <name>L-aspartate</name>
        <dbReference type="ChEBI" id="CHEBI:29991"/>
    </ligand>
</feature>
<feature type="binding site" evidence="1">
    <location>
        <position position="101"/>
    </location>
    <ligand>
        <name>carbamoyl phosphate</name>
        <dbReference type="ChEBI" id="CHEBI:58228"/>
    </ligand>
</feature>
<feature type="binding site" evidence="1">
    <location>
        <position position="129"/>
    </location>
    <ligand>
        <name>carbamoyl phosphate</name>
        <dbReference type="ChEBI" id="CHEBI:58228"/>
    </ligand>
</feature>
<feature type="binding site" evidence="1">
    <location>
        <position position="132"/>
    </location>
    <ligand>
        <name>carbamoyl phosphate</name>
        <dbReference type="ChEBI" id="CHEBI:58228"/>
    </ligand>
</feature>
<feature type="binding site" evidence="1">
    <location>
        <position position="162"/>
    </location>
    <ligand>
        <name>L-aspartate</name>
        <dbReference type="ChEBI" id="CHEBI:29991"/>
    </ligand>
</feature>
<feature type="binding site" evidence="1">
    <location>
        <position position="221"/>
    </location>
    <ligand>
        <name>L-aspartate</name>
        <dbReference type="ChEBI" id="CHEBI:29991"/>
    </ligand>
</feature>
<feature type="binding site" evidence="1">
    <location>
        <position position="260"/>
    </location>
    <ligand>
        <name>carbamoyl phosphate</name>
        <dbReference type="ChEBI" id="CHEBI:58228"/>
    </ligand>
</feature>
<feature type="binding site" evidence="1">
    <location>
        <position position="261"/>
    </location>
    <ligand>
        <name>carbamoyl phosphate</name>
        <dbReference type="ChEBI" id="CHEBI:58228"/>
    </ligand>
</feature>
<gene>
    <name evidence="1" type="primary">pyrB</name>
    <name type="ordered locus">YN1551_1314</name>
</gene>
<organism>
    <name type="scientific">Saccharolobus islandicus (strain Y.N.15.51 / Yellowstone #2)</name>
    <name type="common">Sulfolobus islandicus</name>
    <dbReference type="NCBI Taxonomy" id="419942"/>
    <lineage>
        <taxon>Archaea</taxon>
        <taxon>Thermoproteota</taxon>
        <taxon>Thermoprotei</taxon>
        <taxon>Sulfolobales</taxon>
        <taxon>Sulfolobaceae</taxon>
        <taxon>Saccharolobus</taxon>
    </lineage>
</organism>
<name>PYRB_SACI1</name>
<dbReference type="EC" id="2.1.3.2" evidence="1"/>
<dbReference type="EMBL" id="CP001404">
    <property type="protein sequence ID" value="ACP48409.1"/>
    <property type="molecule type" value="Genomic_DNA"/>
</dbReference>
<dbReference type="RefSeq" id="WP_012713800.1">
    <property type="nucleotide sequence ID" value="NC_012623.1"/>
</dbReference>
<dbReference type="SMR" id="C3NGZ9"/>
<dbReference type="GeneID" id="7810099"/>
<dbReference type="KEGG" id="sin:YN1551_1314"/>
<dbReference type="HOGENOM" id="CLU_043846_1_2_2"/>
<dbReference type="UniPathway" id="UPA00070">
    <property type="reaction ID" value="UER00116"/>
</dbReference>
<dbReference type="Proteomes" id="UP000006818">
    <property type="component" value="Chromosome"/>
</dbReference>
<dbReference type="GO" id="GO:0016597">
    <property type="term" value="F:amino acid binding"/>
    <property type="evidence" value="ECO:0007669"/>
    <property type="project" value="InterPro"/>
</dbReference>
<dbReference type="GO" id="GO:0004070">
    <property type="term" value="F:aspartate carbamoyltransferase activity"/>
    <property type="evidence" value="ECO:0007669"/>
    <property type="project" value="UniProtKB-UniRule"/>
</dbReference>
<dbReference type="GO" id="GO:0006207">
    <property type="term" value="P:'de novo' pyrimidine nucleobase biosynthetic process"/>
    <property type="evidence" value="ECO:0007669"/>
    <property type="project" value="InterPro"/>
</dbReference>
<dbReference type="GO" id="GO:0044205">
    <property type="term" value="P:'de novo' UMP biosynthetic process"/>
    <property type="evidence" value="ECO:0007669"/>
    <property type="project" value="UniProtKB-UniRule"/>
</dbReference>
<dbReference type="GO" id="GO:0006520">
    <property type="term" value="P:amino acid metabolic process"/>
    <property type="evidence" value="ECO:0007669"/>
    <property type="project" value="InterPro"/>
</dbReference>
<dbReference type="FunFam" id="3.40.50.1370:FF:000021">
    <property type="entry name" value="Aspartate carbamoyltransferase"/>
    <property type="match status" value="1"/>
</dbReference>
<dbReference type="Gene3D" id="3.40.50.1370">
    <property type="entry name" value="Aspartate/ornithine carbamoyltransferase"/>
    <property type="match status" value="2"/>
</dbReference>
<dbReference type="HAMAP" id="MF_00001">
    <property type="entry name" value="Asp_carb_tr"/>
    <property type="match status" value="1"/>
</dbReference>
<dbReference type="InterPro" id="IPR006132">
    <property type="entry name" value="Asp/Orn_carbamoyltranf_P-bd"/>
</dbReference>
<dbReference type="InterPro" id="IPR006130">
    <property type="entry name" value="Asp/Orn_carbamoylTrfase"/>
</dbReference>
<dbReference type="InterPro" id="IPR036901">
    <property type="entry name" value="Asp/Orn_carbamoylTrfase_sf"/>
</dbReference>
<dbReference type="InterPro" id="IPR002082">
    <property type="entry name" value="Asp_carbamoyltransf"/>
</dbReference>
<dbReference type="InterPro" id="IPR006131">
    <property type="entry name" value="Asp_carbamoyltransf_Asp/Orn-bd"/>
</dbReference>
<dbReference type="NCBIfam" id="TIGR00670">
    <property type="entry name" value="asp_carb_tr"/>
    <property type="match status" value="1"/>
</dbReference>
<dbReference type="NCBIfam" id="NF002032">
    <property type="entry name" value="PRK00856.1"/>
    <property type="match status" value="1"/>
</dbReference>
<dbReference type="PANTHER" id="PTHR45753:SF6">
    <property type="entry name" value="ASPARTATE CARBAMOYLTRANSFERASE"/>
    <property type="match status" value="1"/>
</dbReference>
<dbReference type="PANTHER" id="PTHR45753">
    <property type="entry name" value="ORNITHINE CARBAMOYLTRANSFERASE, MITOCHONDRIAL"/>
    <property type="match status" value="1"/>
</dbReference>
<dbReference type="Pfam" id="PF00185">
    <property type="entry name" value="OTCace"/>
    <property type="match status" value="1"/>
</dbReference>
<dbReference type="Pfam" id="PF02729">
    <property type="entry name" value="OTCace_N"/>
    <property type="match status" value="1"/>
</dbReference>
<dbReference type="PRINTS" id="PR00100">
    <property type="entry name" value="AOTCASE"/>
</dbReference>
<dbReference type="PRINTS" id="PR00101">
    <property type="entry name" value="ATCASE"/>
</dbReference>
<dbReference type="SUPFAM" id="SSF53671">
    <property type="entry name" value="Aspartate/ornithine carbamoyltransferase"/>
    <property type="match status" value="1"/>
</dbReference>
<dbReference type="PROSITE" id="PS00097">
    <property type="entry name" value="CARBAMOYLTRANSFERASE"/>
    <property type="match status" value="1"/>
</dbReference>
<reference key="1">
    <citation type="journal article" date="2009" name="Proc. Natl. Acad. Sci. U.S.A.">
        <title>Biogeography of the Sulfolobus islandicus pan-genome.</title>
        <authorList>
            <person name="Reno M.L."/>
            <person name="Held N.L."/>
            <person name="Fields C.J."/>
            <person name="Burke P.V."/>
            <person name="Whitaker R.J."/>
        </authorList>
    </citation>
    <scope>NUCLEOTIDE SEQUENCE [LARGE SCALE GENOMIC DNA]</scope>
    <source>
        <strain>Y.N.15.51 / Yellowstone #2</strain>
    </source>
</reference>
<comment type="function">
    <text evidence="1">Catalyzes the condensation of carbamoyl phosphate and aspartate to form carbamoyl aspartate and inorganic phosphate, the committed step in the de novo pyrimidine nucleotide biosynthesis pathway.</text>
</comment>
<comment type="catalytic activity">
    <reaction evidence="1">
        <text>carbamoyl phosphate + L-aspartate = N-carbamoyl-L-aspartate + phosphate + H(+)</text>
        <dbReference type="Rhea" id="RHEA:20013"/>
        <dbReference type="ChEBI" id="CHEBI:15378"/>
        <dbReference type="ChEBI" id="CHEBI:29991"/>
        <dbReference type="ChEBI" id="CHEBI:32814"/>
        <dbReference type="ChEBI" id="CHEBI:43474"/>
        <dbReference type="ChEBI" id="CHEBI:58228"/>
        <dbReference type="EC" id="2.1.3.2"/>
    </reaction>
</comment>
<comment type="pathway">
    <text evidence="1">Pyrimidine metabolism; UMP biosynthesis via de novo pathway; (S)-dihydroorotate from bicarbonate: step 2/3.</text>
</comment>
<comment type="subunit">
    <text evidence="1">Heterooligomer of catalytic and regulatory chains.</text>
</comment>
<comment type="similarity">
    <text evidence="1">Belongs to the aspartate/ornithine carbamoyltransferase superfamily. ATCase family.</text>
</comment>
<evidence type="ECO:0000255" key="1">
    <source>
        <dbReference type="HAMAP-Rule" id="MF_00001"/>
    </source>
</evidence>
<proteinExistence type="inferred from homology"/>